<gene>
    <name type="primary">dnaQ</name>
    <name type="ordered locus">RF_0176</name>
</gene>
<feature type="chain" id="PRO_0000280953" description="DNA polymerase III subunit epsilon">
    <location>
        <begin position="1"/>
        <end position="229"/>
    </location>
</feature>
<feature type="active site" description="Proton acceptor" evidence="1">
    <location>
        <position position="156"/>
    </location>
</feature>
<feature type="binding site" evidence="1">
    <location>
        <position position="10"/>
    </location>
    <ligand>
        <name>a divalent metal cation</name>
        <dbReference type="ChEBI" id="CHEBI:60240"/>
        <label>1</label>
        <note>catalytic</note>
    </ligand>
</feature>
<feature type="binding site" evidence="1">
    <location>
        <position position="10"/>
    </location>
    <ligand>
        <name>a divalent metal cation</name>
        <dbReference type="ChEBI" id="CHEBI:60240"/>
        <label>2</label>
        <note>catalytic</note>
    </ligand>
</feature>
<feature type="binding site" evidence="1">
    <location>
        <position position="10"/>
    </location>
    <ligand>
        <name>substrate</name>
    </ligand>
</feature>
<feature type="binding site" evidence="1">
    <location>
        <position position="12"/>
    </location>
    <ligand>
        <name>a divalent metal cation</name>
        <dbReference type="ChEBI" id="CHEBI:60240"/>
        <label>1</label>
        <note>catalytic</note>
    </ligand>
</feature>
<feature type="binding site" evidence="1">
    <location>
        <position position="12"/>
    </location>
    <ligand>
        <name>substrate</name>
    </ligand>
</feature>
<feature type="binding site" evidence="1">
    <location>
        <position position="55"/>
    </location>
    <ligand>
        <name>substrate</name>
    </ligand>
</feature>
<feature type="binding site" evidence="1">
    <location>
        <position position="60"/>
    </location>
    <ligand>
        <name>substrate</name>
    </ligand>
</feature>
<feature type="binding site" evidence="1">
    <location>
        <position position="161"/>
    </location>
    <ligand>
        <name>a divalent metal cation</name>
        <dbReference type="ChEBI" id="CHEBI:60240"/>
        <label>1</label>
        <note>catalytic</note>
    </ligand>
</feature>
<feature type="binding site" evidence="1">
    <location>
        <position position="161"/>
    </location>
    <ligand>
        <name>substrate</name>
    </ligand>
</feature>
<sequence>MSSLREIILDTETTGLDPRQGHRIVEIGAIEMVNKVLTGRNFHFYINPERDMPFDAYRIHGISGEFLKDKPLFHTIADDFLEFISDSKLIIHNAPFDIKFLNHELSLLKRAEIKLLELSNAIDTLVMARSMFPGSKYNLDALCKRFKVDNSGRQLHGALKDAALLAEVYVELTGGRQSAFKMVDKSVETNNLATNQVNNKTEQATIVIKPTKEELQKHKEFLSSILKTA</sequence>
<organism>
    <name type="scientific">Rickettsia felis (strain ATCC VR-1525 / URRWXCal2)</name>
    <name type="common">Rickettsia azadi</name>
    <dbReference type="NCBI Taxonomy" id="315456"/>
    <lineage>
        <taxon>Bacteria</taxon>
        <taxon>Pseudomonadati</taxon>
        <taxon>Pseudomonadota</taxon>
        <taxon>Alphaproteobacteria</taxon>
        <taxon>Rickettsiales</taxon>
        <taxon>Rickettsiaceae</taxon>
        <taxon>Rickettsieae</taxon>
        <taxon>Rickettsia</taxon>
        <taxon>spotted fever group</taxon>
    </lineage>
</organism>
<protein>
    <recommendedName>
        <fullName>DNA polymerase III subunit epsilon</fullName>
        <ecNumber>2.7.7.7</ecNumber>
    </recommendedName>
</protein>
<keyword id="KW-0235">DNA replication</keyword>
<keyword id="KW-0239">DNA-directed DNA polymerase</keyword>
<keyword id="KW-0269">Exonuclease</keyword>
<keyword id="KW-0378">Hydrolase</keyword>
<keyword id="KW-0460">Magnesium</keyword>
<keyword id="KW-0464">Manganese</keyword>
<keyword id="KW-0479">Metal-binding</keyword>
<keyword id="KW-0540">Nuclease</keyword>
<keyword id="KW-0548">Nucleotidyltransferase</keyword>
<keyword id="KW-0808">Transferase</keyword>
<dbReference type="EC" id="2.7.7.7"/>
<dbReference type="EMBL" id="CP000053">
    <property type="protein sequence ID" value="AAY61027.1"/>
    <property type="molecule type" value="Genomic_DNA"/>
</dbReference>
<dbReference type="SMR" id="Q4UN31"/>
<dbReference type="STRING" id="315456.RF_0176"/>
<dbReference type="KEGG" id="rfe:RF_0176"/>
<dbReference type="eggNOG" id="COG0847">
    <property type="taxonomic scope" value="Bacteria"/>
</dbReference>
<dbReference type="HOGENOM" id="CLU_047806_2_0_5"/>
<dbReference type="OrthoDB" id="9804290at2"/>
<dbReference type="Proteomes" id="UP000008548">
    <property type="component" value="Chromosome"/>
</dbReference>
<dbReference type="GO" id="GO:0005829">
    <property type="term" value="C:cytosol"/>
    <property type="evidence" value="ECO:0007669"/>
    <property type="project" value="TreeGrafter"/>
</dbReference>
<dbReference type="GO" id="GO:0008408">
    <property type="term" value="F:3'-5' exonuclease activity"/>
    <property type="evidence" value="ECO:0007669"/>
    <property type="project" value="TreeGrafter"/>
</dbReference>
<dbReference type="GO" id="GO:0003677">
    <property type="term" value="F:DNA binding"/>
    <property type="evidence" value="ECO:0007669"/>
    <property type="project" value="InterPro"/>
</dbReference>
<dbReference type="GO" id="GO:0003887">
    <property type="term" value="F:DNA-directed DNA polymerase activity"/>
    <property type="evidence" value="ECO:0007669"/>
    <property type="project" value="UniProtKB-KW"/>
</dbReference>
<dbReference type="GO" id="GO:0046872">
    <property type="term" value="F:metal ion binding"/>
    <property type="evidence" value="ECO:0007669"/>
    <property type="project" value="UniProtKB-KW"/>
</dbReference>
<dbReference type="GO" id="GO:0045004">
    <property type="term" value="P:DNA replication proofreading"/>
    <property type="evidence" value="ECO:0007669"/>
    <property type="project" value="TreeGrafter"/>
</dbReference>
<dbReference type="CDD" id="cd06131">
    <property type="entry name" value="DNA_pol_III_epsilon_Ecoli_like"/>
    <property type="match status" value="1"/>
</dbReference>
<dbReference type="FunFam" id="3.30.420.10:FF:000012">
    <property type="entry name" value="DNA polymerase III subunit epsilon"/>
    <property type="match status" value="1"/>
</dbReference>
<dbReference type="Gene3D" id="3.30.420.10">
    <property type="entry name" value="Ribonuclease H-like superfamily/Ribonuclease H"/>
    <property type="match status" value="1"/>
</dbReference>
<dbReference type="InterPro" id="IPR006054">
    <property type="entry name" value="DnaQ"/>
</dbReference>
<dbReference type="InterPro" id="IPR006309">
    <property type="entry name" value="DnaQ_proteo"/>
</dbReference>
<dbReference type="InterPro" id="IPR013520">
    <property type="entry name" value="Exonuclease_RNaseT/DNA_pol3"/>
</dbReference>
<dbReference type="InterPro" id="IPR012337">
    <property type="entry name" value="RNaseH-like_sf"/>
</dbReference>
<dbReference type="InterPro" id="IPR036397">
    <property type="entry name" value="RNaseH_sf"/>
</dbReference>
<dbReference type="NCBIfam" id="TIGR00573">
    <property type="entry name" value="dnaq"/>
    <property type="match status" value="1"/>
</dbReference>
<dbReference type="NCBIfam" id="TIGR01406">
    <property type="entry name" value="dnaQ_proteo"/>
    <property type="match status" value="1"/>
</dbReference>
<dbReference type="NCBIfam" id="NF004316">
    <property type="entry name" value="PRK05711.1"/>
    <property type="match status" value="1"/>
</dbReference>
<dbReference type="PANTHER" id="PTHR30231">
    <property type="entry name" value="DNA POLYMERASE III SUBUNIT EPSILON"/>
    <property type="match status" value="1"/>
</dbReference>
<dbReference type="PANTHER" id="PTHR30231:SF41">
    <property type="entry name" value="DNA POLYMERASE III SUBUNIT EPSILON"/>
    <property type="match status" value="1"/>
</dbReference>
<dbReference type="Pfam" id="PF00929">
    <property type="entry name" value="RNase_T"/>
    <property type="match status" value="1"/>
</dbReference>
<dbReference type="SMART" id="SM00479">
    <property type="entry name" value="EXOIII"/>
    <property type="match status" value="1"/>
</dbReference>
<dbReference type="SUPFAM" id="SSF53098">
    <property type="entry name" value="Ribonuclease H-like"/>
    <property type="match status" value="1"/>
</dbReference>
<accession>Q4UN31</accession>
<reference key="1">
    <citation type="journal article" date="2005" name="PLoS Biol.">
        <title>The genome sequence of Rickettsia felis identifies the first putative conjugative plasmid in an obligate intracellular parasite.</title>
        <authorList>
            <person name="Ogata H."/>
            <person name="Renesto P."/>
            <person name="Audic S."/>
            <person name="Robert C."/>
            <person name="Blanc G."/>
            <person name="Fournier P.-E."/>
            <person name="Parinello H."/>
            <person name="Claverie J.-M."/>
            <person name="Raoult D."/>
        </authorList>
    </citation>
    <scope>NUCLEOTIDE SEQUENCE [LARGE SCALE GENOMIC DNA]</scope>
    <source>
        <strain>ATCC VR-1525 / URRWXCal2</strain>
    </source>
</reference>
<comment type="function">
    <text evidence="1">DNA polymerase III is a complex, multichain enzyme responsible for most of the replicative synthesis in bacteria. The epsilon subunit contain the editing function and is a proofreading 3'-5' exonuclease (By similarity).</text>
</comment>
<comment type="catalytic activity">
    <reaction>
        <text>DNA(n) + a 2'-deoxyribonucleoside 5'-triphosphate = DNA(n+1) + diphosphate</text>
        <dbReference type="Rhea" id="RHEA:22508"/>
        <dbReference type="Rhea" id="RHEA-COMP:17339"/>
        <dbReference type="Rhea" id="RHEA-COMP:17340"/>
        <dbReference type="ChEBI" id="CHEBI:33019"/>
        <dbReference type="ChEBI" id="CHEBI:61560"/>
        <dbReference type="ChEBI" id="CHEBI:173112"/>
        <dbReference type="EC" id="2.7.7.7"/>
    </reaction>
</comment>
<comment type="cofactor">
    <cofactor evidence="1">
        <name>Mg(2+)</name>
        <dbReference type="ChEBI" id="CHEBI:18420"/>
    </cofactor>
    <cofactor evidence="1">
        <name>Mn(2+)</name>
        <dbReference type="ChEBI" id="CHEBI:29035"/>
    </cofactor>
    <text evidence="1">Binds 2 divalent metal cations. Magnesium or manganese.</text>
</comment>
<comment type="subunit">
    <text evidence="1">DNA polymerase III contains a core (composed of alpha, epsilon and theta chains) that associates with a tau subunit. This core dimerizes to form the POLIII' complex. PolIII' associates with the gamma complex (composed of gamma, delta, delta', psi and chi chains) and with the beta chain to form the complete DNA polymerase III complex (By similarity).</text>
</comment>
<evidence type="ECO:0000250" key="1"/>
<name>DPO3E_RICFE</name>
<proteinExistence type="inferred from homology"/>